<gene>
    <name type="ordered locus">YPN_0325</name>
    <name type="ORF">YP516_0331</name>
</gene>
<feature type="chain" id="PRO_1000056963" description="Inosine/xanthosine triphosphatase">
    <location>
        <begin position="1"/>
        <end position="180"/>
    </location>
</feature>
<feature type="binding site" evidence="1">
    <location>
        <begin position="8"/>
        <end position="13"/>
    </location>
    <ligand>
        <name>substrate</name>
    </ligand>
</feature>
<feature type="binding site" evidence="1">
    <location>
        <position position="38"/>
    </location>
    <ligand>
        <name>Mg(2+)</name>
        <dbReference type="ChEBI" id="CHEBI:18420"/>
    </ligand>
</feature>
<feature type="binding site" evidence="1">
    <location>
        <begin position="68"/>
        <end position="69"/>
    </location>
    <ligand>
        <name>substrate</name>
    </ligand>
</feature>
<feature type="binding site" evidence="1">
    <location>
        <position position="68"/>
    </location>
    <ligand>
        <name>Mg(2+)</name>
        <dbReference type="ChEBI" id="CHEBI:18420"/>
    </ligand>
</feature>
<comment type="function">
    <text evidence="1">Phosphatase that hydrolyzes non-canonical purine nucleotides such as XTP and ITP to their respective diphosphate derivatives. Probably excludes non-canonical purines from DNA/RNA precursor pool, thus preventing their incorporation into DNA/RNA and avoiding chromosomal lesions.</text>
</comment>
<comment type="catalytic activity">
    <reaction evidence="1">
        <text>XTP + H2O = XDP + phosphate + H(+)</text>
        <dbReference type="Rhea" id="RHEA:28406"/>
        <dbReference type="ChEBI" id="CHEBI:15377"/>
        <dbReference type="ChEBI" id="CHEBI:15378"/>
        <dbReference type="ChEBI" id="CHEBI:43474"/>
        <dbReference type="ChEBI" id="CHEBI:59884"/>
        <dbReference type="ChEBI" id="CHEBI:61314"/>
        <dbReference type="EC" id="3.6.1.73"/>
    </reaction>
</comment>
<comment type="catalytic activity">
    <reaction evidence="1">
        <text>ITP + H2O = IDP + phosphate + H(+)</text>
        <dbReference type="Rhea" id="RHEA:28330"/>
        <dbReference type="ChEBI" id="CHEBI:15377"/>
        <dbReference type="ChEBI" id="CHEBI:15378"/>
        <dbReference type="ChEBI" id="CHEBI:43474"/>
        <dbReference type="ChEBI" id="CHEBI:58280"/>
        <dbReference type="ChEBI" id="CHEBI:61402"/>
        <dbReference type="EC" id="3.6.1.73"/>
    </reaction>
</comment>
<comment type="cofactor">
    <cofactor evidence="1">
        <name>Mg(2+)</name>
        <dbReference type="ChEBI" id="CHEBI:18420"/>
    </cofactor>
    <cofactor evidence="1">
        <name>Mn(2+)</name>
        <dbReference type="ChEBI" id="CHEBI:29035"/>
    </cofactor>
    <text evidence="1">Binds 1 divalent metal cation per subunit; can use either Mg(2+) or Mn(2+).</text>
</comment>
<comment type="subunit">
    <text evidence="1">Homodimer.</text>
</comment>
<comment type="similarity">
    <text evidence="1">Belongs to the YjjX NTPase family.</text>
</comment>
<keyword id="KW-0378">Hydrolase</keyword>
<keyword id="KW-0460">Magnesium</keyword>
<keyword id="KW-0464">Manganese</keyword>
<keyword id="KW-0479">Metal-binding</keyword>
<keyword id="KW-0546">Nucleotide metabolism</keyword>
<keyword id="KW-0547">Nucleotide-binding</keyword>
<sequence length="180" mass="19695">MYHVIAATTNPAKINAITLAFDDVYGPGQYRIEGVNVDSGVPLQPIGSTETRIGARQRVKNARQVRPEADFWVGIEAGIEDNMTFAWMVVEHLQARGESRSASLMLPDIILQGIRQGRELGDEMAVLSGISNVKQQGGAIGIFTQGKLTRTSVYHQALLLALVPFHNEIYQRPSPSKPAI</sequence>
<dbReference type="EC" id="3.6.1.73" evidence="1"/>
<dbReference type="EMBL" id="CP000305">
    <property type="protein sequence ID" value="ABG16657.1"/>
    <property type="molecule type" value="Genomic_DNA"/>
</dbReference>
<dbReference type="EMBL" id="ACNQ01000006">
    <property type="protein sequence ID" value="EEO78109.1"/>
    <property type="molecule type" value="Genomic_DNA"/>
</dbReference>
<dbReference type="SMR" id="Q1CMX3"/>
<dbReference type="KEGG" id="ypn:YPN_0325"/>
<dbReference type="HOGENOM" id="CLU_087417_1_0_6"/>
<dbReference type="Proteomes" id="UP000008936">
    <property type="component" value="Chromosome"/>
</dbReference>
<dbReference type="GO" id="GO:0103023">
    <property type="term" value="F:ITPase activity"/>
    <property type="evidence" value="ECO:0007669"/>
    <property type="project" value="UniProtKB-EC"/>
</dbReference>
<dbReference type="GO" id="GO:0046872">
    <property type="term" value="F:metal ion binding"/>
    <property type="evidence" value="ECO:0007669"/>
    <property type="project" value="UniProtKB-KW"/>
</dbReference>
<dbReference type="GO" id="GO:0000166">
    <property type="term" value="F:nucleotide binding"/>
    <property type="evidence" value="ECO:0007669"/>
    <property type="project" value="UniProtKB-KW"/>
</dbReference>
<dbReference type="GO" id="GO:0017111">
    <property type="term" value="F:ribonucleoside triphosphate phosphatase activity"/>
    <property type="evidence" value="ECO:0000250"/>
    <property type="project" value="UniProtKB"/>
</dbReference>
<dbReference type="GO" id="GO:0009117">
    <property type="term" value="P:nucleotide metabolic process"/>
    <property type="evidence" value="ECO:0007669"/>
    <property type="project" value="UniProtKB-KW"/>
</dbReference>
<dbReference type="GO" id="GO:0006772">
    <property type="term" value="P:thiamine metabolic process"/>
    <property type="evidence" value="ECO:0007669"/>
    <property type="project" value="TreeGrafter"/>
</dbReference>
<dbReference type="FunFam" id="3.90.950.10:FF:000002">
    <property type="entry name" value="Inosine/xanthosine triphosphatase"/>
    <property type="match status" value="1"/>
</dbReference>
<dbReference type="Gene3D" id="3.90.950.10">
    <property type="match status" value="1"/>
</dbReference>
<dbReference type="HAMAP" id="MF_00648">
    <property type="entry name" value="Non_canon_purine_NTPase_YjjX"/>
    <property type="match status" value="1"/>
</dbReference>
<dbReference type="InterPro" id="IPR029001">
    <property type="entry name" value="ITPase-like_fam"/>
</dbReference>
<dbReference type="InterPro" id="IPR002786">
    <property type="entry name" value="Non_canon_purine_NTPase"/>
</dbReference>
<dbReference type="InterPro" id="IPR026533">
    <property type="entry name" value="NTPase/PRRC1"/>
</dbReference>
<dbReference type="InterPro" id="IPR050299">
    <property type="entry name" value="YjjX_NTPase"/>
</dbReference>
<dbReference type="NCBIfam" id="TIGR00258">
    <property type="entry name" value="inosine/xanthosine triphosphatase"/>
    <property type="match status" value="1"/>
</dbReference>
<dbReference type="NCBIfam" id="NF003459">
    <property type="entry name" value="PRK05074.1"/>
    <property type="match status" value="1"/>
</dbReference>
<dbReference type="PANTHER" id="PTHR34699">
    <property type="match status" value="1"/>
</dbReference>
<dbReference type="PANTHER" id="PTHR34699:SF2">
    <property type="entry name" value="NON-CANONICAL PURINE NTP PHOSPHATASE_PRRC1 DOMAIN-CONTAINING PROTEIN"/>
    <property type="match status" value="1"/>
</dbReference>
<dbReference type="Pfam" id="PF01931">
    <property type="entry name" value="NTPase_I-T"/>
    <property type="match status" value="1"/>
</dbReference>
<dbReference type="SUPFAM" id="SSF52972">
    <property type="entry name" value="ITPase-like"/>
    <property type="match status" value="1"/>
</dbReference>
<reference key="1">
    <citation type="journal article" date="2006" name="J. Bacteriol.">
        <title>Complete genome sequence of Yersinia pestis strains Antiqua and Nepal516: evidence of gene reduction in an emerging pathogen.</title>
        <authorList>
            <person name="Chain P.S.G."/>
            <person name="Hu P."/>
            <person name="Malfatti S.A."/>
            <person name="Radnedge L."/>
            <person name="Larimer F."/>
            <person name="Vergez L.M."/>
            <person name="Worsham P."/>
            <person name="Chu M.C."/>
            <person name="Andersen G.L."/>
        </authorList>
    </citation>
    <scope>NUCLEOTIDE SEQUENCE [LARGE SCALE GENOMIC DNA]</scope>
    <source>
        <strain>Nepal516</strain>
    </source>
</reference>
<reference key="2">
    <citation type="submission" date="2009-04" db="EMBL/GenBank/DDBJ databases">
        <title>Yersinia pestis Nepal516A whole genome shotgun sequencing project.</title>
        <authorList>
            <person name="Plunkett G. III"/>
            <person name="Anderson B.D."/>
            <person name="Baumler D.J."/>
            <person name="Burland V."/>
            <person name="Cabot E.L."/>
            <person name="Glasner J.D."/>
            <person name="Mau B."/>
            <person name="Neeno-Eckwall E."/>
            <person name="Perna N.T."/>
            <person name="Munk A.C."/>
            <person name="Tapia R."/>
            <person name="Green L.D."/>
            <person name="Rogers Y.C."/>
            <person name="Detter J.C."/>
            <person name="Bruce D.C."/>
            <person name="Brettin T.S."/>
        </authorList>
    </citation>
    <scope>NUCLEOTIDE SEQUENCE [LARGE SCALE GENOMIC DNA]</scope>
    <source>
        <strain>Nepal516</strain>
    </source>
</reference>
<proteinExistence type="inferred from homology"/>
<protein>
    <recommendedName>
        <fullName evidence="1">Inosine/xanthosine triphosphatase</fullName>
        <shortName evidence="1">ITPase/XTPase</shortName>
        <ecNumber evidence="1">3.6.1.73</ecNumber>
    </recommendedName>
    <alternativeName>
        <fullName evidence="1">Non-canonical purine NTP phosphatase</fullName>
    </alternativeName>
    <alternativeName>
        <fullName evidence="1">Non-standard purine NTP phosphatase</fullName>
    </alternativeName>
    <alternativeName>
        <fullName evidence="1">Nucleoside-triphosphate phosphatase</fullName>
        <shortName evidence="1">NTPase</shortName>
    </alternativeName>
</protein>
<accession>Q1CMX3</accession>
<accession>C4GNM7</accession>
<organism>
    <name type="scientific">Yersinia pestis bv. Antiqua (strain Nepal516)</name>
    <dbReference type="NCBI Taxonomy" id="377628"/>
    <lineage>
        <taxon>Bacteria</taxon>
        <taxon>Pseudomonadati</taxon>
        <taxon>Pseudomonadota</taxon>
        <taxon>Gammaproteobacteria</taxon>
        <taxon>Enterobacterales</taxon>
        <taxon>Yersiniaceae</taxon>
        <taxon>Yersinia</taxon>
    </lineage>
</organism>
<name>NCPP_YERPN</name>
<evidence type="ECO:0000255" key="1">
    <source>
        <dbReference type="HAMAP-Rule" id="MF_00648"/>
    </source>
</evidence>